<dbReference type="EMBL" id="U11701">
    <property type="protein sequence ID" value="AAB08752.1"/>
    <property type="molecule type" value="mRNA"/>
</dbReference>
<dbReference type="EMBL" id="BC093662">
    <property type="protein sequence ID" value="AAH93662.1"/>
    <property type="molecule type" value="mRNA"/>
</dbReference>
<dbReference type="EMBL" id="BC112185">
    <property type="protein sequence ID" value="AAI12186.1"/>
    <property type="molecule type" value="mRNA"/>
</dbReference>
<dbReference type="EMBL" id="AK094511">
    <property type="protein sequence ID" value="BAC04371.1"/>
    <property type="status" value="ALT_INIT"/>
    <property type="molecule type" value="mRNA"/>
</dbReference>
<dbReference type="EMBL" id="AF124735">
    <property type="protein sequence ID" value="AAD20013.1"/>
    <property type="molecule type" value="mRNA"/>
</dbReference>
<dbReference type="CCDS" id="CCDS6853.1"/>
<dbReference type="RefSeq" id="NP_004780.3">
    <property type="nucleotide sequence ID" value="NM_004789.3"/>
</dbReference>
<dbReference type="BMRB" id="P50458"/>
<dbReference type="SMR" id="P50458"/>
<dbReference type="BioGRID" id="114758">
    <property type="interactions" value="178"/>
</dbReference>
<dbReference type="FunCoup" id="P50458">
    <property type="interactions" value="1313"/>
</dbReference>
<dbReference type="IntAct" id="P50458">
    <property type="interactions" value="171"/>
</dbReference>
<dbReference type="MINT" id="P50458"/>
<dbReference type="STRING" id="9606.ENSP00000362717"/>
<dbReference type="iPTMnet" id="P50458"/>
<dbReference type="PhosphoSitePlus" id="P50458"/>
<dbReference type="BioMuta" id="LHX2"/>
<dbReference type="DMDM" id="8247936"/>
<dbReference type="jPOST" id="P50458"/>
<dbReference type="MassIVE" id="P50458"/>
<dbReference type="PaxDb" id="9606-ENSP00000362717"/>
<dbReference type="PeptideAtlas" id="P50458"/>
<dbReference type="ProteomicsDB" id="56230"/>
<dbReference type="Antibodypedia" id="16286">
    <property type="antibodies" value="391 antibodies from 34 providers"/>
</dbReference>
<dbReference type="DNASU" id="9355"/>
<dbReference type="Ensembl" id="ENST00000373615.9">
    <property type="protein sequence ID" value="ENSP00000362717.4"/>
    <property type="gene ID" value="ENSG00000106689.11"/>
</dbReference>
<dbReference type="GeneID" id="9355"/>
<dbReference type="KEGG" id="hsa:9355"/>
<dbReference type="MANE-Select" id="ENST00000373615.9">
    <property type="protein sequence ID" value="ENSP00000362717.4"/>
    <property type="RefSeq nucleotide sequence ID" value="NM_004789.4"/>
    <property type="RefSeq protein sequence ID" value="NP_004780.3"/>
</dbReference>
<dbReference type="UCSC" id="uc004boe.2">
    <property type="organism name" value="human"/>
</dbReference>
<dbReference type="AGR" id="HGNC:6594"/>
<dbReference type="CTD" id="9355"/>
<dbReference type="DisGeNET" id="9355"/>
<dbReference type="GeneCards" id="LHX2"/>
<dbReference type="HGNC" id="HGNC:6594">
    <property type="gene designation" value="LHX2"/>
</dbReference>
<dbReference type="HPA" id="ENSG00000106689">
    <property type="expression patterns" value="Group enriched (brain, retina)"/>
</dbReference>
<dbReference type="MalaCards" id="LHX2"/>
<dbReference type="MIM" id="603759">
    <property type="type" value="gene"/>
</dbReference>
<dbReference type="neXtProt" id="NX_P50458"/>
<dbReference type="OpenTargets" id="ENSG00000106689"/>
<dbReference type="PharmGKB" id="PA30365"/>
<dbReference type="VEuPathDB" id="HostDB:ENSG00000106689"/>
<dbReference type="eggNOG" id="KOG0490">
    <property type="taxonomic scope" value="Eukaryota"/>
</dbReference>
<dbReference type="GeneTree" id="ENSGT00940000158540"/>
<dbReference type="HOGENOM" id="CLU_027802_4_1_1"/>
<dbReference type="InParanoid" id="P50458"/>
<dbReference type="OMA" id="LHFNHGE"/>
<dbReference type="OrthoDB" id="9990008at2759"/>
<dbReference type="PAN-GO" id="P50458">
    <property type="GO annotations" value="5 GO annotations based on evolutionary models"/>
</dbReference>
<dbReference type="PhylomeDB" id="P50458"/>
<dbReference type="TreeFam" id="TF315442"/>
<dbReference type="PathwayCommons" id="P50458"/>
<dbReference type="Reactome" id="R-HSA-9010553">
    <property type="pathway name" value="Regulation of expression of SLITs and ROBOs"/>
</dbReference>
<dbReference type="Reactome" id="R-HSA-9752946">
    <property type="pathway name" value="Expression and translocation of olfactory receptors"/>
</dbReference>
<dbReference type="SignaLink" id="P50458"/>
<dbReference type="SIGNOR" id="P50458"/>
<dbReference type="BioGRID-ORCS" id="9355">
    <property type="hits" value="7 hits in 1170 CRISPR screens"/>
</dbReference>
<dbReference type="ChiTaRS" id="LHX2">
    <property type="organism name" value="human"/>
</dbReference>
<dbReference type="GeneWiki" id="LHX2"/>
<dbReference type="GenomeRNAi" id="9355"/>
<dbReference type="Pharos" id="P50458">
    <property type="development level" value="Tbio"/>
</dbReference>
<dbReference type="PRO" id="PR:P50458"/>
<dbReference type="Proteomes" id="UP000005640">
    <property type="component" value="Chromosome 9"/>
</dbReference>
<dbReference type="RNAct" id="P50458">
    <property type="molecule type" value="protein"/>
</dbReference>
<dbReference type="Bgee" id="ENSG00000106689">
    <property type="expression patterns" value="Expressed in ventricular zone and 119 other cell types or tissues"/>
</dbReference>
<dbReference type="ExpressionAtlas" id="P50458">
    <property type="expression patterns" value="baseline and differential"/>
</dbReference>
<dbReference type="GO" id="GO:0000785">
    <property type="term" value="C:chromatin"/>
    <property type="evidence" value="ECO:0000247"/>
    <property type="project" value="NTNU_SB"/>
</dbReference>
<dbReference type="GO" id="GO:0005634">
    <property type="term" value="C:nucleus"/>
    <property type="evidence" value="ECO:0000318"/>
    <property type="project" value="GO_Central"/>
</dbReference>
<dbReference type="GO" id="GO:0003682">
    <property type="term" value="F:chromatin binding"/>
    <property type="evidence" value="ECO:0007669"/>
    <property type="project" value="Ensembl"/>
</dbReference>
<dbReference type="GO" id="GO:0001228">
    <property type="term" value="F:DNA-binding transcription activator activity, RNA polymerase II-specific"/>
    <property type="evidence" value="ECO:0007669"/>
    <property type="project" value="Ensembl"/>
</dbReference>
<dbReference type="GO" id="GO:0000981">
    <property type="term" value="F:DNA-binding transcription factor activity, RNA polymerase II-specific"/>
    <property type="evidence" value="ECO:0000247"/>
    <property type="project" value="NTNU_SB"/>
</dbReference>
<dbReference type="GO" id="GO:0046872">
    <property type="term" value="F:metal ion binding"/>
    <property type="evidence" value="ECO:0007669"/>
    <property type="project" value="UniProtKB-KW"/>
</dbReference>
<dbReference type="GO" id="GO:0000978">
    <property type="term" value="F:RNA polymerase II cis-regulatory region sequence-specific DNA binding"/>
    <property type="evidence" value="ECO:0007669"/>
    <property type="project" value="Ensembl"/>
</dbReference>
<dbReference type="GO" id="GO:0000977">
    <property type="term" value="F:RNA polymerase II transcription regulatory region sequence-specific DNA binding"/>
    <property type="evidence" value="ECO:0000318"/>
    <property type="project" value="GO_Central"/>
</dbReference>
<dbReference type="GO" id="GO:0048675">
    <property type="term" value="P:axon extension"/>
    <property type="evidence" value="ECO:0007669"/>
    <property type="project" value="Ensembl"/>
</dbReference>
<dbReference type="GO" id="GO:0007411">
    <property type="term" value="P:axon guidance"/>
    <property type="evidence" value="ECO:0007669"/>
    <property type="project" value="Ensembl"/>
</dbReference>
<dbReference type="GO" id="GO:0021987">
    <property type="term" value="P:cerebral cortex development"/>
    <property type="evidence" value="ECO:0007669"/>
    <property type="project" value="Ensembl"/>
</dbReference>
<dbReference type="GO" id="GO:0009953">
    <property type="term" value="P:dorsal/ventral pattern formation"/>
    <property type="evidence" value="ECO:0007669"/>
    <property type="project" value="Ensembl"/>
</dbReference>
<dbReference type="GO" id="GO:0001942">
    <property type="term" value="P:hair follicle development"/>
    <property type="evidence" value="ECO:0007669"/>
    <property type="project" value="Ensembl"/>
</dbReference>
<dbReference type="GO" id="GO:0045199">
    <property type="term" value="P:maintenance of epithelial cell apical/basal polarity"/>
    <property type="evidence" value="ECO:0007669"/>
    <property type="project" value="Ensembl"/>
</dbReference>
<dbReference type="GO" id="GO:0007498">
    <property type="term" value="P:mesoderm development"/>
    <property type="evidence" value="ECO:0007669"/>
    <property type="project" value="Ensembl"/>
</dbReference>
<dbReference type="GO" id="GO:0045814">
    <property type="term" value="P:negative regulation of gene expression, epigenetic"/>
    <property type="evidence" value="ECO:0007669"/>
    <property type="project" value="Ensembl"/>
</dbReference>
<dbReference type="GO" id="GO:0050768">
    <property type="term" value="P:negative regulation of neurogenesis"/>
    <property type="evidence" value="ECO:0007669"/>
    <property type="project" value="Ensembl"/>
</dbReference>
<dbReference type="GO" id="GO:0001843">
    <property type="term" value="P:neural tube closure"/>
    <property type="evidence" value="ECO:0007669"/>
    <property type="project" value="Ensembl"/>
</dbReference>
<dbReference type="GO" id="GO:0030182">
    <property type="term" value="P:neuron differentiation"/>
    <property type="evidence" value="ECO:0000318"/>
    <property type="project" value="GO_Central"/>
</dbReference>
<dbReference type="GO" id="GO:0021772">
    <property type="term" value="P:olfactory bulb development"/>
    <property type="evidence" value="ECO:0007669"/>
    <property type="project" value="Ensembl"/>
</dbReference>
<dbReference type="GO" id="GO:0045893">
    <property type="term" value="P:positive regulation of DNA-templated transcription"/>
    <property type="evidence" value="ECO:0000250"/>
    <property type="project" value="UniProtKB"/>
</dbReference>
<dbReference type="GO" id="GO:2000179">
    <property type="term" value="P:positive regulation of neural precursor cell proliferation"/>
    <property type="evidence" value="ECO:0007669"/>
    <property type="project" value="Ensembl"/>
</dbReference>
<dbReference type="GO" id="GO:0006357">
    <property type="term" value="P:regulation of transcription by RNA polymerase II"/>
    <property type="evidence" value="ECO:0000318"/>
    <property type="project" value="GO_Central"/>
</dbReference>
<dbReference type="GO" id="GO:0060041">
    <property type="term" value="P:retina development in camera-type eye"/>
    <property type="evidence" value="ECO:0007669"/>
    <property type="project" value="Ensembl"/>
</dbReference>
<dbReference type="GO" id="GO:0021978">
    <property type="term" value="P:telencephalon regionalization"/>
    <property type="evidence" value="ECO:0007669"/>
    <property type="project" value="Ensembl"/>
</dbReference>
<dbReference type="CDD" id="cd00086">
    <property type="entry name" value="homeodomain"/>
    <property type="match status" value="1"/>
</dbReference>
<dbReference type="CDD" id="cd09469">
    <property type="entry name" value="LIM1_Lhx2"/>
    <property type="match status" value="1"/>
</dbReference>
<dbReference type="CDD" id="cd09377">
    <property type="entry name" value="LIM2_Lhx2_Lhx9"/>
    <property type="match status" value="1"/>
</dbReference>
<dbReference type="FunFam" id="1.10.10.60:FF:000027">
    <property type="entry name" value="LIM/homeobox protein Lhx9"/>
    <property type="match status" value="1"/>
</dbReference>
<dbReference type="FunFam" id="2.10.110.10:FF:000039">
    <property type="entry name" value="LIM/homeobox protein Lhx9 isoform 2"/>
    <property type="match status" value="1"/>
</dbReference>
<dbReference type="FunFam" id="2.10.110.10:FF:000033">
    <property type="entry name" value="LIM/homeobox protein Lhx9 isoform X2"/>
    <property type="match status" value="1"/>
</dbReference>
<dbReference type="Gene3D" id="2.10.110.10">
    <property type="entry name" value="Cysteine Rich Protein"/>
    <property type="match status" value="2"/>
</dbReference>
<dbReference type="Gene3D" id="1.10.10.60">
    <property type="entry name" value="Homeodomain-like"/>
    <property type="match status" value="1"/>
</dbReference>
<dbReference type="InterPro" id="IPR001356">
    <property type="entry name" value="HD"/>
</dbReference>
<dbReference type="InterPro" id="IPR017970">
    <property type="entry name" value="Homeobox_CS"/>
</dbReference>
<dbReference type="InterPro" id="IPR009057">
    <property type="entry name" value="Homeodomain-like_sf"/>
</dbReference>
<dbReference type="InterPro" id="IPR050453">
    <property type="entry name" value="LIM_Homeobox_TF"/>
</dbReference>
<dbReference type="InterPro" id="IPR001781">
    <property type="entry name" value="Znf_LIM"/>
</dbReference>
<dbReference type="PANTHER" id="PTHR24208">
    <property type="entry name" value="LIM/HOMEOBOX PROTEIN LHX"/>
    <property type="match status" value="1"/>
</dbReference>
<dbReference type="PANTHER" id="PTHR24208:SF80">
    <property type="entry name" value="LIM_HOMEOBOX PROTEIN LHX2"/>
    <property type="match status" value="1"/>
</dbReference>
<dbReference type="Pfam" id="PF00046">
    <property type="entry name" value="Homeodomain"/>
    <property type="match status" value="1"/>
</dbReference>
<dbReference type="Pfam" id="PF00412">
    <property type="entry name" value="LIM"/>
    <property type="match status" value="2"/>
</dbReference>
<dbReference type="SMART" id="SM00389">
    <property type="entry name" value="HOX"/>
    <property type="match status" value="1"/>
</dbReference>
<dbReference type="SMART" id="SM00132">
    <property type="entry name" value="LIM"/>
    <property type="match status" value="2"/>
</dbReference>
<dbReference type="SUPFAM" id="SSF57716">
    <property type="entry name" value="Glucocorticoid receptor-like (DNA-binding domain)"/>
    <property type="match status" value="2"/>
</dbReference>
<dbReference type="SUPFAM" id="SSF46689">
    <property type="entry name" value="Homeodomain-like"/>
    <property type="match status" value="1"/>
</dbReference>
<dbReference type="PROSITE" id="PS00027">
    <property type="entry name" value="HOMEOBOX_1"/>
    <property type="match status" value="1"/>
</dbReference>
<dbReference type="PROSITE" id="PS50071">
    <property type="entry name" value="HOMEOBOX_2"/>
    <property type="match status" value="1"/>
</dbReference>
<dbReference type="PROSITE" id="PS00478">
    <property type="entry name" value="LIM_DOMAIN_1"/>
    <property type="match status" value="2"/>
</dbReference>
<dbReference type="PROSITE" id="PS50023">
    <property type="entry name" value="LIM_DOMAIN_2"/>
    <property type="match status" value="2"/>
</dbReference>
<accession>P50458</accession>
<accession>O95860</accession>
<accession>Q52M57</accession>
<accession>Q8N1Z3</accession>
<evidence type="ECO:0000250" key="1"/>
<evidence type="ECO:0000250" key="2">
    <source>
        <dbReference type="UniProtKB" id="Q9Z0S2"/>
    </source>
</evidence>
<evidence type="ECO:0000255" key="3"/>
<evidence type="ECO:0000255" key="4">
    <source>
        <dbReference type="PROSITE-ProRule" id="PRU00108"/>
    </source>
</evidence>
<evidence type="ECO:0000255" key="5">
    <source>
        <dbReference type="PROSITE-ProRule" id="PRU00125"/>
    </source>
</evidence>
<evidence type="ECO:0000256" key="6">
    <source>
        <dbReference type="SAM" id="MobiDB-lite"/>
    </source>
</evidence>
<evidence type="ECO:0000305" key="7"/>
<feature type="chain" id="PRO_0000075778" description="LIM/homeobox protein Lhx2">
    <location>
        <begin position="1"/>
        <end position="406"/>
    </location>
</feature>
<feature type="domain" description="LIM zinc-binding 1" evidence="5">
    <location>
        <begin position="53"/>
        <end position="105"/>
    </location>
</feature>
<feature type="domain" description="LIM zinc-binding 2" evidence="5">
    <location>
        <begin position="115"/>
        <end position="168"/>
    </location>
</feature>
<feature type="DNA-binding region" description="Homeobox" evidence="4">
    <location>
        <begin position="266"/>
        <end position="325"/>
    </location>
</feature>
<feature type="region of interest" description="Disordered" evidence="6">
    <location>
        <begin position="250"/>
        <end position="270"/>
    </location>
</feature>
<feature type="region of interest" description="Disordered" evidence="6">
    <location>
        <begin position="328"/>
        <end position="374"/>
    </location>
</feature>
<feature type="region of interest" description="Disordered" evidence="6">
    <location>
        <begin position="387"/>
        <end position="406"/>
    </location>
</feature>
<feature type="short sequence motif" description="Nuclear localization signal" evidence="3">
    <location>
        <begin position="307"/>
        <end position="323"/>
    </location>
</feature>
<feature type="compositionally biased region" description="Polar residues" evidence="6">
    <location>
        <begin position="328"/>
        <end position="356"/>
    </location>
</feature>
<feature type="compositionally biased region" description="Low complexity" evidence="6">
    <location>
        <begin position="357"/>
        <end position="374"/>
    </location>
</feature>
<feature type="compositionally biased region" description="Polar residues" evidence="6">
    <location>
        <begin position="396"/>
        <end position="406"/>
    </location>
</feature>
<feature type="sequence conflict" description="In Ref. 1; AAB08752." evidence="7" ref="1">
    <original>AKSEAPA</original>
    <variation>QERGSR</variation>
    <location>
        <begin position="22"/>
        <end position="28"/>
    </location>
</feature>
<feature type="sequence conflict" description="In Ref. 1; AAB08752." evidence="7" ref="1">
    <original>A</original>
    <variation>G</variation>
    <location>
        <position position="54"/>
    </location>
</feature>
<feature type="sequence conflict" description="In Ref. 3." evidence="7" ref="3">
    <original>Y</original>
    <variation>YSPSLHGPY</variation>
    <location>
        <position position="107"/>
    </location>
</feature>
<feature type="sequence conflict" description="In Ref. 1." evidence="7" ref="1">
    <original>A</original>
    <variation>Q</variation>
    <location>
        <position position="187"/>
    </location>
</feature>
<feature type="sequence conflict" description="In Ref. 1." evidence="7" ref="1">
    <original>AAA</original>
    <variation>RAR</variation>
    <location>
        <begin position="190"/>
        <end position="192"/>
    </location>
</feature>
<feature type="sequence conflict" description="In Ref. 1." evidence="7" ref="1">
    <location>
        <position position="196"/>
    </location>
</feature>
<feature type="sequence conflict" description="In Ref. 1; AAB08752." evidence="7" ref="1">
    <original>NA</original>
    <variation>TR</variation>
    <location>
        <begin position="241"/>
        <end position="242"/>
    </location>
</feature>
<feature type="sequence conflict" description="In Ref. 1; AAB08752." evidence="7" ref="1">
    <original>GHEPHSPSQTTLTNLF</original>
    <variation>AMSLTAPHKRLLPTFSNDSQPPHPTISLKKKLSLV</variation>
    <location>
        <begin position="391"/>
        <end position="406"/>
    </location>
</feature>
<name>LHX2_HUMAN</name>
<sequence>MLFHSLSGPEVHGVIDEMDRRAKSEAPAISSAIDRGDTETTMPSISSDRAALCAGCGGKISDRYYLLAVDKQWHMRCLKCCECKLNLESELTCFSKDGSIYCKEDYYRRFSVQRCARCHLGISASEMVMRARDLVYHLNCFTCTTCNKMLTTGDHFGMKDSLVYCRLHFEALLQGEYPAHFNHADVAAAAAAAAAAKSAGLGAAGANPLGLPYYNGVGTVQKGRPRKRKSPGPGADLAAYNAALSCNENDAEHLDRDQPYPSSQKTKRMRTSFKHHQLRTMKSYFAINHNPDAKDLKQLAQKTGLTKRVLQVWFQNARAKFRRNLLRQENTGVDKSTDAALQTGTPSGPASELSNASLSPSSTPTTLTDLTSPTLPTVTSVLTSVPGNLEGHEPHSPSQTTLTNLF</sequence>
<gene>
    <name type="primary">LHX2</name>
    <name type="synonym">LH2</name>
</gene>
<comment type="function">
    <text evidence="1">Acts as a transcriptional activator. Stimulates the promoter of the alpha-glycoprotein gene. Transcriptional regulatory protein involved in the control of cell differentiation in developing lymphoid and neural cell types (By similarity).</text>
</comment>
<comment type="subunit">
    <text evidence="2">Interacts (via LIM domains) with CITED2. Interacts with POU4F2.</text>
</comment>
<comment type="interaction">
    <interactant intactId="EBI-12179869">
        <id>P50458</id>
    </interactant>
    <interactant intactId="EBI-11954519">
        <id>Q49AR9</id>
        <label>ANKS1A</label>
    </interactant>
    <organismsDiffer>false</organismsDiffer>
    <experiments>3</experiments>
</comment>
<comment type="interaction">
    <interactant intactId="EBI-12179869">
        <id>P50458</id>
    </interactant>
    <interactant intactId="EBI-308663">
        <id>A7KAX9</id>
        <label>ARHGAP32</label>
    </interactant>
    <organismsDiffer>false</organismsDiffer>
    <experiments>3</experiments>
</comment>
<comment type="interaction">
    <interactant intactId="EBI-12179869">
        <id>P50458</id>
    </interactant>
    <interactant intactId="EBI-954079">
        <id>Q8NDZ0</id>
        <label>BEND2</label>
    </interactant>
    <organismsDiffer>false</organismsDiffer>
    <experiments>3</experiments>
</comment>
<comment type="interaction">
    <interactant intactId="EBI-12179869">
        <id>P50458</id>
    </interactant>
    <interactant intactId="EBI-719415">
        <id>Q4VC44</id>
        <label>FLYWCH1</label>
    </interactant>
    <organismsDiffer>false</organismsDiffer>
    <experiments>3</experiments>
</comment>
<comment type="interaction">
    <interactant intactId="EBI-12179869">
        <id>P50458</id>
    </interactant>
    <interactant intactId="EBI-748420">
        <id>Q9NSC5</id>
        <label>HOMER3</label>
    </interactant>
    <organismsDiffer>false</organismsDiffer>
    <experiments>3</experiments>
</comment>
<comment type="interaction">
    <interactant intactId="EBI-12179869">
        <id>P50458</id>
    </interactant>
    <interactant intactId="EBI-1752118">
        <id>P31273</id>
        <label>HOXC8</label>
    </interactant>
    <organismsDiffer>false</organismsDiffer>
    <experiments>3</experiments>
</comment>
<comment type="interaction">
    <interactant intactId="EBI-12179869">
        <id>P50458</id>
    </interactant>
    <interactant intactId="EBI-12204387">
        <id>P50053-2</id>
        <label>KHK</label>
    </interactant>
    <organismsDiffer>false</organismsDiffer>
    <experiments>3</experiments>
</comment>
<comment type="interaction">
    <interactant intactId="EBI-12179869">
        <id>P50458</id>
    </interactant>
    <interactant intactId="EBI-677177">
        <id>Q86U70</id>
        <label>LDB1</label>
    </interactant>
    <organismsDiffer>false</organismsDiffer>
    <experiments>3</experiments>
</comment>
<comment type="interaction">
    <interactant intactId="EBI-12179869">
        <id>P50458</id>
    </interactant>
    <interactant intactId="EBI-11979761">
        <id>Q86U70-2</id>
        <label>LDB1</label>
    </interactant>
    <organismsDiffer>false</organismsDiffer>
    <experiments>3</experiments>
</comment>
<comment type="interaction">
    <interactant intactId="EBI-12179869">
        <id>P50458</id>
    </interactant>
    <interactant intactId="EBI-10241423">
        <id>Q3ZCW2</id>
        <label>LGALSL</label>
    </interactant>
    <organismsDiffer>false</organismsDiffer>
    <experiments>3</experiments>
</comment>
<comment type="interaction">
    <interactant intactId="EBI-12179869">
        <id>P50458</id>
    </interactant>
    <interactant intactId="EBI-739832">
        <id>Q8TBB1</id>
        <label>LNX1</label>
    </interactant>
    <organismsDiffer>false</organismsDiffer>
    <experiments>3</experiments>
</comment>
<comment type="interaction">
    <interactant intactId="EBI-12179869">
        <id>P50458</id>
    </interactant>
    <interactant intactId="EBI-2341787">
        <id>Q17RB8</id>
        <label>LONRF1</label>
    </interactant>
    <organismsDiffer>false</organismsDiffer>
    <experiments>3</experiments>
</comment>
<comment type="interaction">
    <interactant intactId="EBI-12179869">
        <id>P50458</id>
    </interactant>
    <interactant intactId="EBI-10288852">
        <id>Q9UBU8-2</id>
        <label>MORF4L1</label>
    </interactant>
    <organismsDiffer>false</organismsDiffer>
    <experiments>3</experiments>
</comment>
<comment type="interaction">
    <interactant intactId="EBI-12179869">
        <id>P50458</id>
    </interactant>
    <interactant intactId="EBI-9675802">
        <id>Q6PF18</id>
        <label>MORN3</label>
    </interactant>
    <organismsDiffer>false</organismsDiffer>
    <experiments>3</experiments>
</comment>
<comment type="interaction">
    <interactant intactId="EBI-12179869">
        <id>P50458</id>
    </interactant>
    <interactant intactId="EBI-2804080">
        <id>Q99650</id>
        <label>OSMR</label>
    </interactant>
    <organismsDiffer>false</organismsDiffer>
    <experiments>3</experiments>
</comment>
<comment type="interaction">
    <interactant intactId="EBI-12179869">
        <id>P50458</id>
    </interactant>
    <interactant intactId="EBI-17236143">
        <id>Q12837</id>
        <label>POU4F2</label>
    </interactant>
    <organismsDiffer>false</organismsDiffer>
    <experiments>3</experiments>
</comment>
<comment type="interaction">
    <interactant intactId="EBI-12179869">
        <id>P50458</id>
    </interactant>
    <interactant intactId="EBI-2557649">
        <id>Q9Y3C6</id>
        <label>PPIL1</label>
    </interactant>
    <organismsDiffer>false</organismsDiffer>
    <experiments>3</experiments>
</comment>
<comment type="interaction">
    <interactant intactId="EBI-12179869">
        <id>P50458</id>
    </interactant>
    <interactant intactId="EBI-11955057">
        <id>Q8N8B7-2</id>
        <label>TCEANC</label>
    </interactant>
    <organismsDiffer>false</organismsDiffer>
    <experiments>3</experiments>
</comment>
<comment type="interaction">
    <interactant intactId="EBI-12179869">
        <id>P50458</id>
    </interactant>
    <interactant intactId="EBI-2555179">
        <id>Q9NUJ3</id>
        <label>TCP11L1</label>
    </interactant>
    <organismsDiffer>false</organismsDiffer>
    <experiments>3</experiments>
</comment>
<comment type="interaction">
    <interactant intactId="EBI-12179869">
        <id>P50458</id>
    </interactant>
    <interactant intactId="EBI-740492">
        <id>Q9UKI8</id>
        <label>TLK1</label>
    </interactant>
    <organismsDiffer>false</organismsDiffer>
    <experiments>3</experiments>
</comment>
<comment type="interaction">
    <interactant intactId="EBI-12179869">
        <id>P50458</id>
    </interactant>
    <interactant intactId="EBI-11119202">
        <id>Q9UL33-2</id>
        <label>TRAPPC2L</label>
    </interactant>
    <organismsDiffer>false</organismsDiffer>
    <experiments>3</experiments>
</comment>
<comment type="interaction">
    <interactant intactId="EBI-12179869">
        <id>P50458</id>
    </interactant>
    <interactant intactId="EBI-17208936">
        <id>P0CB47</id>
        <label>UBTFL1</label>
    </interactant>
    <organismsDiffer>false</organismsDiffer>
    <experiments>3</experiments>
</comment>
<comment type="interaction">
    <interactant intactId="EBI-12179869">
        <id>P50458</id>
    </interactant>
    <interactant intactId="EBI-12151755">
        <id>Q96MM3</id>
        <label>ZFP42</label>
    </interactant>
    <organismsDiffer>false</organismsDiffer>
    <experiments>3</experiments>
</comment>
<comment type="interaction">
    <interactant intactId="EBI-12179869">
        <id>P50458</id>
    </interactant>
    <interactant intactId="EBI-10269136">
        <id>Q8NB15</id>
        <label>ZNF511</label>
    </interactant>
    <organismsDiffer>false</organismsDiffer>
    <experiments>3</experiments>
</comment>
<comment type="subcellular location">
    <subcellularLocation>
        <location evidence="7">Nucleus</location>
    </subcellularLocation>
</comment>
<comment type="domain">
    <text evidence="1">LIM domains are necessary for transcription activation.</text>
</comment>
<comment type="sequence caution" evidence="7">
    <conflict type="erroneous initiation">
        <sequence resource="EMBL-CDS" id="BAC04371"/>
    </conflict>
</comment>
<organism>
    <name type="scientific">Homo sapiens</name>
    <name type="common">Human</name>
    <dbReference type="NCBI Taxonomy" id="9606"/>
    <lineage>
        <taxon>Eukaryota</taxon>
        <taxon>Metazoa</taxon>
        <taxon>Chordata</taxon>
        <taxon>Craniata</taxon>
        <taxon>Vertebrata</taxon>
        <taxon>Euteleostomi</taxon>
        <taxon>Mammalia</taxon>
        <taxon>Eutheria</taxon>
        <taxon>Euarchontoglires</taxon>
        <taxon>Primates</taxon>
        <taxon>Haplorrhini</taxon>
        <taxon>Catarrhini</taxon>
        <taxon>Hominidae</taxon>
        <taxon>Homo</taxon>
    </lineage>
</organism>
<proteinExistence type="evidence at protein level"/>
<protein>
    <recommendedName>
        <fullName>LIM/homeobox protein Lhx2</fullName>
        <shortName>Homeobox protein LH-2</shortName>
        <shortName>LIM homeobox protein 2</shortName>
    </recommendedName>
</protein>
<keyword id="KW-0010">Activator</keyword>
<keyword id="KW-0238">DNA-binding</keyword>
<keyword id="KW-0371">Homeobox</keyword>
<keyword id="KW-0440">LIM domain</keyword>
<keyword id="KW-0479">Metal-binding</keyword>
<keyword id="KW-0539">Nucleus</keyword>
<keyword id="KW-1267">Proteomics identification</keyword>
<keyword id="KW-1185">Reference proteome</keyword>
<keyword id="KW-0677">Repeat</keyword>
<keyword id="KW-0804">Transcription</keyword>
<keyword id="KW-0805">Transcription regulation</keyword>
<keyword id="KW-0862">Zinc</keyword>
<reference key="1">
    <citation type="journal article" date="1996" name="Oncogene">
        <title>Identification of a human LIM-Hox gene, hLH-2, aberrantly expressed in chronic myelogenous leukaemia and located on 9q33-34.1.</title>
        <authorList>
            <person name="Wu H.-K."/>
            <person name="Heng H.H.Q."/>
            <person name="Siderovski D.P."/>
            <person name="Dong W.-F."/>
            <person name="Okuno Y."/>
            <person name="Shi X.-M."/>
            <person name="Tsui L.-C."/>
            <person name="Minden M.D."/>
        </authorList>
    </citation>
    <scope>NUCLEOTIDE SEQUENCE [MRNA]</scope>
    <source>
        <tissue>Placenta</tissue>
    </source>
</reference>
<reference key="2">
    <citation type="journal article" date="2004" name="Genome Res.">
        <title>The status, quality, and expansion of the NIH full-length cDNA project: the Mammalian Gene Collection (MGC).</title>
        <authorList>
            <consortium name="The MGC Project Team"/>
        </authorList>
    </citation>
    <scope>NUCLEOTIDE SEQUENCE [LARGE SCALE MRNA]</scope>
    <source>
        <tissue>Brain</tissue>
    </source>
</reference>
<reference key="3">
    <citation type="journal article" date="2004" name="Nat. Genet.">
        <title>Complete sequencing and characterization of 21,243 full-length human cDNAs.</title>
        <authorList>
            <person name="Ota T."/>
            <person name="Suzuki Y."/>
            <person name="Nishikawa T."/>
            <person name="Otsuki T."/>
            <person name="Sugiyama T."/>
            <person name="Irie R."/>
            <person name="Wakamatsu A."/>
            <person name="Hayashi K."/>
            <person name="Sato H."/>
            <person name="Nagai K."/>
            <person name="Kimura K."/>
            <person name="Makita H."/>
            <person name="Sekine M."/>
            <person name="Obayashi M."/>
            <person name="Nishi T."/>
            <person name="Shibahara T."/>
            <person name="Tanaka T."/>
            <person name="Ishii S."/>
            <person name="Yamamoto J."/>
            <person name="Saito K."/>
            <person name="Kawai Y."/>
            <person name="Isono Y."/>
            <person name="Nakamura Y."/>
            <person name="Nagahari K."/>
            <person name="Murakami K."/>
            <person name="Yasuda T."/>
            <person name="Iwayanagi T."/>
            <person name="Wagatsuma M."/>
            <person name="Shiratori A."/>
            <person name="Sudo H."/>
            <person name="Hosoiri T."/>
            <person name="Kaku Y."/>
            <person name="Kodaira H."/>
            <person name="Kondo H."/>
            <person name="Sugawara M."/>
            <person name="Takahashi M."/>
            <person name="Kanda K."/>
            <person name="Yokoi T."/>
            <person name="Furuya T."/>
            <person name="Kikkawa E."/>
            <person name="Omura Y."/>
            <person name="Abe K."/>
            <person name="Kamihara K."/>
            <person name="Katsuta N."/>
            <person name="Sato K."/>
            <person name="Tanikawa M."/>
            <person name="Yamazaki M."/>
            <person name="Ninomiya K."/>
            <person name="Ishibashi T."/>
            <person name="Yamashita H."/>
            <person name="Murakawa K."/>
            <person name="Fujimori K."/>
            <person name="Tanai H."/>
            <person name="Kimata M."/>
            <person name="Watanabe M."/>
            <person name="Hiraoka S."/>
            <person name="Chiba Y."/>
            <person name="Ishida S."/>
            <person name="Ono Y."/>
            <person name="Takiguchi S."/>
            <person name="Watanabe S."/>
            <person name="Yosida M."/>
            <person name="Hotuta T."/>
            <person name="Kusano J."/>
            <person name="Kanehori K."/>
            <person name="Takahashi-Fujii A."/>
            <person name="Hara H."/>
            <person name="Tanase T.-O."/>
            <person name="Nomura Y."/>
            <person name="Togiya S."/>
            <person name="Komai F."/>
            <person name="Hara R."/>
            <person name="Takeuchi K."/>
            <person name="Arita M."/>
            <person name="Imose N."/>
            <person name="Musashino K."/>
            <person name="Yuuki H."/>
            <person name="Oshima A."/>
            <person name="Sasaki N."/>
            <person name="Aotsuka S."/>
            <person name="Yoshikawa Y."/>
            <person name="Matsunawa H."/>
            <person name="Ichihara T."/>
            <person name="Shiohata N."/>
            <person name="Sano S."/>
            <person name="Moriya S."/>
            <person name="Momiyama H."/>
            <person name="Satoh N."/>
            <person name="Takami S."/>
            <person name="Terashima Y."/>
            <person name="Suzuki O."/>
            <person name="Nakagawa S."/>
            <person name="Senoh A."/>
            <person name="Mizoguchi H."/>
            <person name="Goto Y."/>
            <person name="Shimizu F."/>
            <person name="Wakebe H."/>
            <person name="Hishigaki H."/>
            <person name="Watanabe T."/>
            <person name="Sugiyama A."/>
            <person name="Takemoto M."/>
            <person name="Kawakami B."/>
            <person name="Yamazaki M."/>
            <person name="Watanabe K."/>
            <person name="Kumagai A."/>
            <person name="Itakura S."/>
            <person name="Fukuzumi Y."/>
            <person name="Fujimori Y."/>
            <person name="Komiyama M."/>
            <person name="Tashiro H."/>
            <person name="Tanigami A."/>
            <person name="Fujiwara T."/>
            <person name="Ono T."/>
            <person name="Yamada K."/>
            <person name="Fujii Y."/>
            <person name="Ozaki K."/>
            <person name="Hirao M."/>
            <person name="Ohmori Y."/>
            <person name="Kawabata A."/>
            <person name="Hikiji T."/>
            <person name="Kobatake N."/>
            <person name="Inagaki H."/>
            <person name="Ikema Y."/>
            <person name="Okamoto S."/>
            <person name="Okitani R."/>
            <person name="Kawakami T."/>
            <person name="Noguchi S."/>
            <person name="Itoh T."/>
            <person name="Shigeta K."/>
            <person name="Senba T."/>
            <person name="Matsumura K."/>
            <person name="Nakajima Y."/>
            <person name="Mizuno T."/>
            <person name="Morinaga M."/>
            <person name="Sasaki M."/>
            <person name="Togashi T."/>
            <person name="Oyama M."/>
            <person name="Hata H."/>
            <person name="Watanabe M."/>
            <person name="Komatsu T."/>
            <person name="Mizushima-Sugano J."/>
            <person name="Satoh T."/>
            <person name="Shirai Y."/>
            <person name="Takahashi Y."/>
            <person name="Nakagawa K."/>
            <person name="Okumura K."/>
            <person name="Nagase T."/>
            <person name="Nomura N."/>
            <person name="Kikuchi H."/>
            <person name="Masuho Y."/>
            <person name="Yamashita R."/>
            <person name="Nakai K."/>
            <person name="Yada T."/>
            <person name="Nakamura Y."/>
            <person name="Ohara O."/>
            <person name="Isogai T."/>
            <person name="Sugano S."/>
        </authorList>
    </citation>
    <scope>NUCLEOTIDE SEQUENCE [LARGE SCALE MRNA] OF 4-406</scope>
    <source>
        <tissue>Brain cortex</tissue>
    </source>
</reference>
<reference key="4">
    <citation type="journal article" date="1999" name="Proc. Natl. Acad. Sci. U.S.A.">
        <title>Conservation of the expression and function of apterous orthologs in Drosophila and mammals.</title>
        <authorList>
            <person name="Rincon-Limas D.E."/>
            <person name="Lu C.-H."/>
            <person name="Canal I."/>
            <person name="Calleja M."/>
            <person name="Rodriguez-Esteban C."/>
            <person name="Izpisua-Belmonte J.-C."/>
            <person name="Botas J."/>
        </authorList>
    </citation>
    <scope>NUCLEOTIDE SEQUENCE [MRNA] OF 18-406</scope>
</reference>